<dbReference type="EC" id="2.1.1.172" evidence="1"/>
<dbReference type="EMBL" id="BX950851">
    <property type="protein sequence ID" value="CAG73649.1"/>
    <property type="molecule type" value="Genomic_DNA"/>
</dbReference>
<dbReference type="RefSeq" id="WP_011092342.1">
    <property type="nucleotide sequence ID" value="NC_004547.2"/>
</dbReference>
<dbReference type="SMR" id="Q6D984"/>
<dbReference type="STRING" id="218491.ECA0735"/>
<dbReference type="GeneID" id="57207462"/>
<dbReference type="KEGG" id="eca:ECA0735"/>
<dbReference type="PATRIC" id="fig|218491.5.peg.733"/>
<dbReference type="eggNOG" id="COG2813">
    <property type="taxonomic scope" value="Bacteria"/>
</dbReference>
<dbReference type="HOGENOM" id="CLU_049581_0_1_6"/>
<dbReference type="OrthoDB" id="9816072at2"/>
<dbReference type="Proteomes" id="UP000007966">
    <property type="component" value="Chromosome"/>
</dbReference>
<dbReference type="GO" id="GO:0005737">
    <property type="term" value="C:cytoplasm"/>
    <property type="evidence" value="ECO:0007669"/>
    <property type="project" value="UniProtKB-SubCell"/>
</dbReference>
<dbReference type="GO" id="GO:0052914">
    <property type="term" value="F:16S rRNA (guanine(1207)-N(2))-methyltransferase activity"/>
    <property type="evidence" value="ECO:0007669"/>
    <property type="project" value="UniProtKB-EC"/>
</dbReference>
<dbReference type="GO" id="GO:0003676">
    <property type="term" value="F:nucleic acid binding"/>
    <property type="evidence" value="ECO:0007669"/>
    <property type="project" value="InterPro"/>
</dbReference>
<dbReference type="CDD" id="cd02440">
    <property type="entry name" value="AdoMet_MTases"/>
    <property type="match status" value="1"/>
</dbReference>
<dbReference type="Gene3D" id="3.40.50.150">
    <property type="entry name" value="Vaccinia Virus protein VP39"/>
    <property type="match status" value="2"/>
</dbReference>
<dbReference type="HAMAP" id="MF_01862">
    <property type="entry name" value="16SrRNA_methyltr_C"/>
    <property type="match status" value="1"/>
</dbReference>
<dbReference type="InterPro" id="IPR002052">
    <property type="entry name" value="DNA_methylase_N6_adenine_CS"/>
</dbReference>
<dbReference type="InterPro" id="IPR013675">
    <property type="entry name" value="Mtase_sm_N"/>
</dbReference>
<dbReference type="InterPro" id="IPR023543">
    <property type="entry name" value="rRNA_ssu_MeTfrase_C"/>
</dbReference>
<dbReference type="InterPro" id="IPR046977">
    <property type="entry name" value="RsmC/RlmG"/>
</dbReference>
<dbReference type="InterPro" id="IPR029063">
    <property type="entry name" value="SAM-dependent_MTases_sf"/>
</dbReference>
<dbReference type="InterPro" id="IPR007848">
    <property type="entry name" value="Small_mtfrase_dom"/>
</dbReference>
<dbReference type="NCBIfam" id="NF007023">
    <property type="entry name" value="PRK09489.1"/>
    <property type="match status" value="1"/>
</dbReference>
<dbReference type="PANTHER" id="PTHR47816">
    <property type="entry name" value="RIBOSOMAL RNA SMALL SUBUNIT METHYLTRANSFERASE C"/>
    <property type="match status" value="1"/>
</dbReference>
<dbReference type="PANTHER" id="PTHR47816:SF4">
    <property type="entry name" value="RIBOSOMAL RNA SMALL SUBUNIT METHYLTRANSFERASE C"/>
    <property type="match status" value="1"/>
</dbReference>
<dbReference type="Pfam" id="PF05175">
    <property type="entry name" value="MTS"/>
    <property type="match status" value="1"/>
</dbReference>
<dbReference type="Pfam" id="PF08468">
    <property type="entry name" value="MTS_N"/>
    <property type="match status" value="1"/>
</dbReference>
<dbReference type="SUPFAM" id="SSF53335">
    <property type="entry name" value="S-adenosyl-L-methionine-dependent methyltransferases"/>
    <property type="match status" value="1"/>
</dbReference>
<proteinExistence type="inferred from homology"/>
<gene>
    <name evidence="1" type="primary">rsmC</name>
    <name type="ordered locus">ECA0735</name>
</gene>
<keyword id="KW-0963">Cytoplasm</keyword>
<keyword id="KW-0489">Methyltransferase</keyword>
<keyword id="KW-1185">Reference proteome</keyword>
<keyword id="KW-0698">rRNA processing</keyword>
<keyword id="KW-0949">S-adenosyl-L-methionine</keyword>
<keyword id="KW-0808">Transferase</keyword>
<sequence>MSALTPASEVILRHSDEFLSRRVLFAGDLQDTLPAQFEAASVRVHCNQYHHWQQMAKPLGDNAQYSLVADAELVADSDTLIYYWPKSKQEAEFQLCNLLSLLPVGAEIFVVGENRSGVRSAETVLSDFVELVKIDSARRCGLYHGRIDKQASFTLDDWWDEYVTEGVTVKTLPGIFSRDGLDPGSRLLLSTFEPHMKGKVLDIACGAGVLASVLAKQSPKIRLTLSDVSAAAVESSNATLAANALEGSVIASNVYSDIDGRFDMIVSNPPFHDGLQTSLQAVEMLIRGAVTHLPIGGQLRIVANAFLPYPALLDAAFGSHEVLAQTGRFKVYQATVGRPPRTGKGRRR</sequence>
<feature type="chain" id="PRO_0000369696" description="Ribosomal RNA small subunit methyltransferase C">
    <location>
        <begin position="1"/>
        <end position="348"/>
    </location>
</feature>
<evidence type="ECO:0000255" key="1">
    <source>
        <dbReference type="HAMAP-Rule" id="MF_01862"/>
    </source>
</evidence>
<comment type="function">
    <text evidence="1">Specifically methylates the guanine in position 1207 of 16S rRNA in the 30S particle.</text>
</comment>
<comment type="catalytic activity">
    <reaction evidence="1">
        <text>guanosine(1207) in 16S rRNA + S-adenosyl-L-methionine = N(2)-methylguanosine(1207) in 16S rRNA + S-adenosyl-L-homocysteine + H(+)</text>
        <dbReference type="Rhea" id="RHEA:42736"/>
        <dbReference type="Rhea" id="RHEA-COMP:10213"/>
        <dbReference type="Rhea" id="RHEA-COMP:10214"/>
        <dbReference type="ChEBI" id="CHEBI:15378"/>
        <dbReference type="ChEBI" id="CHEBI:57856"/>
        <dbReference type="ChEBI" id="CHEBI:59789"/>
        <dbReference type="ChEBI" id="CHEBI:74269"/>
        <dbReference type="ChEBI" id="CHEBI:74481"/>
        <dbReference type="EC" id="2.1.1.172"/>
    </reaction>
</comment>
<comment type="subunit">
    <text evidence="1">Monomer.</text>
</comment>
<comment type="subcellular location">
    <subcellularLocation>
        <location evidence="1">Cytoplasm</location>
    </subcellularLocation>
</comment>
<comment type="similarity">
    <text evidence="1">Belongs to the methyltransferase superfamily. RsmC family.</text>
</comment>
<accession>Q6D984</accession>
<name>RSMC_PECAS</name>
<reference key="1">
    <citation type="journal article" date="2004" name="Proc. Natl. Acad. Sci. U.S.A.">
        <title>Genome sequence of the enterobacterial phytopathogen Erwinia carotovora subsp. atroseptica and characterization of virulence factors.</title>
        <authorList>
            <person name="Bell K.S."/>
            <person name="Sebaihia M."/>
            <person name="Pritchard L."/>
            <person name="Holden M.T.G."/>
            <person name="Hyman L.J."/>
            <person name="Holeva M.C."/>
            <person name="Thomson N.R."/>
            <person name="Bentley S.D."/>
            <person name="Churcher L.J.C."/>
            <person name="Mungall K."/>
            <person name="Atkin R."/>
            <person name="Bason N."/>
            <person name="Brooks K."/>
            <person name="Chillingworth T."/>
            <person name="Clark K."/>
            <person name="Doggett J."/>
            <person name="Fraser A."/>
            <person name="Hance Z."/>
            <person name="Hauser H."/>
            <person name="Jagels K."/>
            <person name="Moule S."/>
            <person name="Norbertczak H."/>
            <person name="Ormond D."/>
            <person name="Price C."/>
            <person name="Quail M.A."/>
            <person name="Sanders M."/>
            <person name="Walker D."/>
            <person name="Whitehead S."/>
            <person name="Salmond G.P.C."/>
            <person name="Birch P.R.J."/>
            <person name="Parkhill J."/>
            <person name="Toth I.K."/>
        </authorList>
    </citation>
    <scope>NUCLEOTIDE SEQUENCE [LARGE SCALE GENOMIC DNA]</scope>
    <source>
        <strain>SCRI 1043 / ATCC BAA-672</strain>
    </source>
</reference>
<organism>
    <name type="scientific">Pectobacterium atrosepticum (strain SCRI 1043 / ATCC BAA-672)</name>
    <name type="common">Erwinia carotovora subsp. atroseptica</name>
    <dbReference type="NCBI Taxonomy" id="218491"/>
    <lineage>
        <taxon>Bacteria</taxon>
        <taxon>Pseudomonadati</taxon>
        <taxon>Pseudomonadota</taxon>
        <taxon>Gammaproteobacteria</taxon>
        <taxon>Enterobacterales</taxon>
        <taxon>Pectobacteriaceae</taxon>
        <taxon>Pectobacterium</taxon>
    </lineage>
</organism>
<protein>
    <recommendedName>
        <fullName evidence="1">Ribosomal RNA small subunit methyltransferase C</fullName>
        <ecNumber evidence="1">2.1.1.172</ecNumber>
    </recommendedName>
    <alternativeName>
        <fullName evidence="1">16S rRNA m2G1207 methyltransferase</fullName>
    </alternativeName>
    <alternativeName>
        <fullName evidence="1">rRNA (guanine-N(2)-)-methyltransferase RsmC</fullName>
    </alternativeName>
</protein>